<organism>
    <name type="scientific">Campylobacter jejuni subsp. jejuni serotype O:2 (strain ATCC 700819 / NCTC 11168)</name>
    <dbReference type="NCBI Taxonomy" id="192222"/>
    <lineage>
        <taxon>Bacteria</taxon>
        <taxon>Pseudomonadati</taxon>
        <taxon>Campylobacterota</taxon>
        <taxon>Epsilonproteobacteria</taxon>
        <taxon>Campylobacterales</taxon>
        <taxon>Campylobacteraceae</taxon>
        <taxon>Campylobacter</taxon>
    </lineage>
</organism>
<sequence length="282" mass="30349">MTLLDGKALSAKIKEELKEKNQFLKSKGIESCLAVILVGDNPASQTYVKSKAKACEECGIKSLVYHLNENITQNELLALINTLNHDDSVHGILVQLPLPDHICKDLILESIISSKDVDGFHPINVGYLNLGLESGFLPCTPLGVMKLLKAYEIDLEGKDAVIIGASNIVGRPMATMLLNAGATVSVCHIKTKDLSLYTRQADLIIVAAGCVNLLRSDMVKEGVIVVDVGINRLESGKIVGDVDFEEVSKKSSYITPVPGGVGPMTIAMLLENTVKSAKNRLN</sequence>
<protein>
    <recommendedName>
        <fullName evidence="1">Bifunctional protein FolD</fullName>
    </recommendedName>
    <domain>
        <recommendedName>
            <fullName evidence="1">Methylenetetrahydrofolate dehydrogenase</fullName>
            <ecNumber evidence="1">1.5.1.5</ecNumber>
        </recommendedName>
    </domain>
    <domain>
        <recommendedName>
            <fullName evidence="1">Methenyltetrahydrofolate cyclohydrolase</fullName>
            <ecNumber evidence="1">3.5.4.9</ecNumber>
        </recommendedName>
    </domain>
</protein>
<gene>
    <name evidence="1" type="primary">folD</name>
    <name type="ordered locus">Cj0855</name>
</gene>
<accession>Q0PA35</accession>
<evidence type="ECO:0000255" key="1">
    <source>
        <dbReference type="HAMAP-Rule" id="MF_01576"/>
    </source>
</evidence>
<evidence type="ECO:0000269" key="2">
    <source ref="2"/>
</evidence>
<evidence type="ECO:0000305" key="3">
    <source ref="2"/>
</evidence>
<evidence type="ECO:0007829" key="4">
    <source>
        <dbReference type="PDB" id="6DEB"/>
    </source>
</evidence>
<name>FOLD_CAMJE</name>
<feature type="chain" id="PRO_0000268304" description="Bifunctional protein FolD">
    <location>
        <begin position="1"/>
        <end position="282"/>
    </location>
</feature>
<feature type="binding site" evidence="1 2">
    <location>
        <begin position="164"/>
        <end position="166"/>
    </location>
    <ligand>
        <name>NADP(+)</name>
        <dbReference type="ChEBI" id="CHEBI:58349"/>
    </ligand>
</feature>
<feature type="binding site" evidence="1 2">
    <location>
        <position position="189"/>
    </location>
    <ligand>
        <name>NADP(+)</name>
        <dbReference type="ChEBI" id="CHEBI:58349"/>
    </ligand>
</feature>
<feature type="binding site" evidence="1 2">
    <location>
        <position position="230"/>
    </location>
    <ligand>
        <name>NADP(+)</name>
        <dbReference type="ChEBI" id="CHEBI:58349"/>
    </ligand>
</feature>
<feature type="helix" evidence="4">
    <location>
        <begin position="6"/>
        <end position="26"/>
    </location>
</feature>
<feature type="strand" evidence="4">
    <location>
        <begin position="32"/>
        <end position="39"/>
    </location>
</feature>
<feature type="helix" evidence="4">
    <location>
        <begin position="42"/>
        <end position="57"/>
    </location>
</feature>
<feature type="strand" evidence="4">
    <location>
        <begin position="61"/>
        <end position="67"/>
    </location>
</feature>
<feature type="helix" evidence="4">
    <location>
        <begin position="73"/>
        <end position="85"/>
    </location>
</feature>
<feature type="strand" evidence="4">
    <location>
        <begin position="91"/>
        <end position="94"/>
    </location>
</feature>
<feature type="helix" evidence="4">
    <location>
        <begin position="104"/>
        <end position="110"/>
    </location>
</feature>
<feature type="helix" evidence="4">
    <location>
        <begin position="113"/>
        <end position="115"/>
    </location>
</feature>
<feature type="helix" evidence="4">
    <location>
        <begin position="122"/>
        <end position="129"/>
    </location>
</feature>
<feature type="strand" evidence="4">
    <location>
        <begin position="133"/>
        <end position="135"/>
    </location>
</feature>
<feature type="helix" evidence="4">
    <location>
        <begin position="139"/>
        <end position="150"/>
    </location>
</feature>
<feature type="strand" evidence="4">
    <location>
        <begin position="159"/>
        <end position="163"/>
    </location>
</feature>
<feature type="turn" evidence="4">
    <location>
        <begin position="167"/>
        <end position="169"/>
    </location>
</feature>
<feature type="helix" evidence="4">
    <location>
        <begin position="170"/>
        <end position="179"/>
    </location>
</feature>
<feature type="strand" evidence="4">
    <location>
        <begin position="183"/>
        <end position="187"/>
    </location>
</feature>
<feature type="helix" evidence="4">
    <location>
        <begin position="194"/>
        <end position="198"/>
    </location>
</feature>
<feature type="strand" evidence="4">
    <location>
        <begin position="202"/>
        <end position="206"/>
    </location>
</feature>
<feature type="helix" evidence="4">
    <location>
        <begin position="216"/>
        <end position="218"/>
    </location>
</feature>
<feature type="strand" evidence="4">
    <location>
        <begin position="223"/>
        <end position="227"/>
    </location>
</feature>
<feature type="helix" evidence="4">
    <location>
        <begin position="244"/>
        <end position="247"/>
    </location>
</feature>
<feature type="helix" evidence="4">
    <location>
        <begin position="248"/>
        <end position="250"/>
    </location>
</feature>
<feature type="strand" evidence="4">
    <location>
        <begin position="251"/>
        <end position="254"/>
    </location>
</feature>
<feature type="strand" evidence="4">
    <location>
        <begin position="257"/>
        <end position="260"/>
    </location>
</feature>
<feature type="helix" evidence="4">
    <location>
        <begin position="261"/>
        <end position="279"/>
    </location>
</feature>
<comment type="function">
    <text evidence="1">Catalyzes the oxidation of 5,10-methylenetetrahydrofolate to 5,10-methenyltetrahydrofolate and then the hydrolysis of 5,10-methenyltetrahydrofolate to 10-formyltetrahydrofolate.</text>
</comment>
<comment type="catalytic activity">
    <reaction evidence="1">
        <text>(6R)-5,10-methylene-5,6,7,8-tetrahydrofolate + NADP(+) = (6R)-5,10-methenyltetrahydrofolate + NADPH</text>
        <dbReference type="Rhea" id="RHEA:22812"/>
        <dbReference type="ChEBI" id="CHEBI:15636"/>
        <dbReference type="ChEBI" id="CHEBI:57455"/>
        <dbReference type="ChEBI" id="CHEBI:57783"/>
        <dbReference type="ChEBI" id="CHEBI:58349"/>
        <dbReference type="EC" id="1.5.1.5"/>
    </reaction>
</comment>
<comment type="catalytic activity">
    <reaction evidence="1">
        <text>(6R)-5,10-methenyltetrahydrofolate + H2O = (6R)-10-formyltetrahydrofolate + H(+)</text>
        <dbReference type="Rhea" id="RHEA:23700"/>
        <dbReference type="ChEBI" id="CHEBI:15377"/>
        <dbReference type="ChEBI" id="CHEBI:15378"/>
        <dbReference type="ChEBI" id="CHEBI:57455"/>
        <dbReference type="ChEBI" id="CHEBI:195366"/>
        <dbReference type="EC" id="3.5.4.9"/>
    </reaction>
</comment>
<comment type="pathway">
    <text evidence="1">One-carbon metabolism; tetrahydrofolate interconversion.</text>
</comment>
<comment type="subunit">
    <text evidence="3">Homodimer.</text>
</comment>
<comment type="similarity">
    <text evidence="1">Belongs to the tetrahydrofolate dehydrogenase/cyclohydrolase family.</text>
</comment>
<reference key="1">
    <citation type="journal article" date="2000" name="Nature">
        <title>The genome sequence of the food-borne pathogen Campylobacter jejuni reveals hypervariable sequences.</title>
        <authorList>
            <person name="Parkhill J."/>
            <person name="Wren B.W."/>
            <person name="Mungall K.L."/>
            <person name="Ketley J.M."/>
            <person name="Churcher C.M."/>
            <person name="Basham D."/>
            <person name="Chillingworth T."/>
            <person name="Davies R.M."/>
            <person name="Feltwell T."/>
            <person name="Holroyd S."/>
            <person name="Jagels K."/>
            <person name="Karlyshev A.V."/>
            <person name="Moule S."/>
            <person name="Pallen M.J."/>
            <person name="Penn C.W."/>
            <person name="Quail M.A."/>
            <person name="Rajandream M.A."/>
            <person name="Rutherford K.M."/>
            <person name="van Vliet A.H.M."/>
            <person name="Whitehead S."/>
            <person name="Barrell B.G."/>
        </authorList>
    </citation>
    <scope>NUCLEOTIDE SEQUENCE [LARGE SCALE GENOMIC DNA]</scope>
    <source>
        <strain>ATCC 700819 / NCTC 11168</strain>
    </source>
</reference>
<reference key="2">
    <citation type="submission" date="2010-10" db="PDB data bank">
        <title>Crystal structure of FolD bifunctional protein.</title>
        <authorList>
            <consortium name="Center for structural genomics of infectious diseases (CSGID)"/>
        </authorList>
    </citation>
    <scope>X-RAY CRYSTALLOGRAPHY (2.23 ANGSTROMS) IN COMPLEX WITH NAD</scope>
    <scope>SUBUNIT</scope>
</reference>
<keyword id="KW-0002">3D-structure</keyword>
<keyword id="KW-0028">Amino-acid biosynthesis</keyword>
<keyword id="KW-0368">Histidine biosynthesis</keyword>
<keyword id="KW-0378">Hydrolase</keyword>
<keyword id="KW-0486">Methionine biosynthesis</keyword>
<keyword id="KW-0511">Multifunctional enzyme</keyword>
<keyword id="KW-0521">NADP</keyword>
<keyword id="KW-0554">One-carbon metabolism</keyword>
<keyword id="KW-0560">Oxidoreductase</keyword>
<keyword id="KW-0658">Purine biosynthesis</keyword>
<keyword id="KW-1185">Reference proteome</keyword>
<dbReference type="EC" id="1.5.1.5" evidence="1"/>
<dbReference type="EC" id="3.5.4.9" evidence="1"/>
<dbReference type="EMBL" id="AL111168">
    <property type="protein sequence ID" value="CAL34983.1"/>
    <property type="molecule type" value="Genomic_DNA"/>
</dbReference>
<dbReference type="PIR" id="G81358">
    <property type="entry name" value="G81358"/>
</dbReference>
<dbReference type="RefSeq" id="WP_002864845.1">
    <property type="nucleotide sequence ID" value="NZ_SZUC01000001.1"/>
</dbReference>
<dbReference type="RefSeq" id="YP_002344262.1">
    <property type="nucleotide sequence ID" value="NC_002163.1"/>
</dbReference>
<dbReference type="PDB" id="3P2O">
    <property type="method" value="X-ray"/>
    <property type="resolution" value="2.23 A"/>
    <property type="chains" value="A/B=1-282"/>
</dbReference>
<dbReference type="PDB" id="6DE8">
    <property type="method" value="X-ray"/>
    <property type="resolution" value="2.10 A"/>
    <property type="chains" value="A/B=1-282"/>
</dbReference>
<dbReference type="PDB" id="6DEB">
    <property type="method" value="X-ray"/>
    <property type="resolution" value="1.70 A"/>
    <property type="chains" value="A/B=1-282"/>
</dbReference>
<dbReference type="PDBsum" id="3P2O"/>
<dbReference type="PDBsum" id="6DE8"/>
<dbReference type="PDBsum" id="6DEB"/>
<dbReference type="SMR" id="Q0PA35"/>
<dbReference type="IntAct" id="Q0PA35">
    <property type="interactions" value="36"/>
</dbReference>
<dbReference type="STRING" id="192222.Cj0855"/>
<dbReference type="PaxDb" id="192222-Cj0855"/>
<dbReference type="EnsemblBacteria" id="CAL34983">
    <property type="protein sequence ID" value="CAL34983"/>
    <property type="gene ID" value="Cj0855"/>
</dbReference>
<dbReference type="GeneID" id="905155"/>
<dbReference type="KEGG" id="cje:Cj0855"/>
<dbReference type="PATRIC" id="fig|192222.6.peg.843"/>
<dbReference type="eggNOG" id="COG0190">
    <property type="taxonomic scope" value="Bacteria"/>
</dbReference>
<dbReference type="HOGENOM" id="CLU_034045_2_1_7"/>
<dbReference type="OrthoDB" id="9803580at2"/>
<dbReference type="UniPathway" id="UPA00193"/>
<dbReference type="EvolutionaryTrace" id="Q0PA35"/>
<dbReference type="Proteomes" id="UP000000799">
    <property type="component" value="Chromosome"/>
</dbReference>
<dbReference type="GO" id="GO:0005829">
    <property type="term" value="C:cytosol"/>
    <property type="evidence" value="ECO:0007669"/>
    <property type="project" value="TreeGrafter"/>
</dbReference>
<dbReference type="GO" id="GO:0004477">
    <property type="term" value="F:methenyltetrahydrofolate cyclohydrolase activity"/>
    <property type="evidence" value="ECO:0007669"/>
    <property type="project" value="UniProtKB-UniRule"/>
</dbReference>
<dbReference type="GO" id="GO:0004488">
    <property type="term" value="F:methylenetetrahydrofolate dehydrogenase (NADP+) activity"/>
    <property type="evidence" value="ECO:0007669"/>
    <property type="project" value="UniProtKB-UniRule"/>
</dbReference>
<dbReference type="GO" id="GO:0000105">
    <property type="term" value="P:L-histidine biosynthetic process"/>
    <property type="evidence" value="ECO:0007669"/>
    <property type="project" value="UniProtKB-KW"/>
</dbReference>
<dbReference type="GO" id="GO:0009086">
    <property type="term" value="P:methionine biosynthetic process"/>
    <property type="evidence" value="ECO:0007669"/>
    <property type="project" value="UniProtKB-KW"/>
</dbReference>
<dbReference type="GO" id="GO:0006164">
    <property type="term" value="P:purine nucleotide biosynthetic process"/>
    <property type="evidence" value="ECO:0007669"/>
    <property type="project" value="UniProtKB-KW"/>
</dbReference>
<dbReference type="GO" id="GO:0035999">
    <property type="term" value="P:tetrahydrofolate interconversion"/>
    <property type="evidence" value="ECO:0007669"/>
    <property type="project" value="UniProtKB-UniRule"/>
</dbReference>
<dbReference type="CDD" id="cd01080">
    <property type="entry name" value="NAD_bind_m-THF_DH_Cyclohyd"/>
    <property type="match status" value="1"/>
</dbReference>
<dbReference type="FunFam" id="3.40.50.720:FF:000094">
    <property type="entry name" value="Bifunctional protein FolD"/>
    <property type="match status" value="1"/>
</dbReference>
<dbReference type="FunFam" id="3.40.50.10860:FF:000005">
    <property type="entry name" value="C-1-tetrahydrofolate synthase, cytoplasmic, putative"/>
    <property type="match status" value="1"/>
</dbReference>
<dbReference type="Gene3D" id="3.40.50.10860">
    <property type="entry name" value="Leucine Dehydrogenase, chain A, domain 1"/>
    <property type="match status" value="1"/>
</dbReference>
<dbReference type="Gene3D" id="3.40.50.720">
    <property type="entry name" value="NAD(P)-binding Rossmann-like Domain"/>
    <property type="match status" value="1"/>
</dbReference>
<dbReference type="HAMAP" id="MF_01576">
    <property type="entry name" value="THF_DHG_CYH"/>
    <property type="match status" value="1"/>
</dbReference>
<dbReference type="InterPro" id="IPR046346">
    <property type="entry name" value="Aminoacid_DH-like_N_sf"/>
</dbReference>
<dbReference type="InterPro" id="IPR036291">
    <property type="entry name" value="NAD(P)-bd_dom_sf"/>
</dbReference>
<dbReference type="InterPro" id="IPR000672">
    <property type="entry name" value="THF_DH/CycHdrlase"/>
</dbReference>
<dbReference type="InterPro" id="IPR020630">
    <property type="entry name" value="THF_DH/CycHdrlase_cat_dom"/>
</dbReference>
<dbReference type="InterPro" id="IPR020867">
    <property type="entry name" value="THF_DH/CycHdrlase_CS"/>
</dbReference>
<dbReference type="InterPro" id="IPR020631">
    <property type="entry name" value="THF_DH/CycHdrlase_NAD-bd_dom"/>
</dbReference>
<dbReference type="NCBIfam" id="NF008058">
    <property type="entry name" value="PRK10792.1"/>
    <property type="match status" value="1"/>
</dbReference>
<dbReference type="NCBIfam" id="NF010763">
    <property type="entry name" value="PRK14166.1"/>
    <property type="match status" value="1"/>
</dbReference>
<dbReference type="NCBIfam" id="NF010783">
    <property type="entry name" value="PRK14186.1"/>
    <property type="match status" value="1"/>
</dbReference>
<dbReference type="NCBIfam" id="NF010787">
    <property type="entry name" value="PRK14191.1"/>
    <property type="match status" value="1"/>
</dbReference>
<dbReference type="PANTHER" id="PTHR48099:SF5">
    <property type="entry name" value="C-1-TETRAHYDROFOLATE SYNTHASE, CYTOPLASMIC"/>
    <property type="match status" value="1"/>
</dbReference>
<dbReference type="PANTHER" id="PTHR48099">
    <property type="entry name" value="C-1-TETRAHYDROFOLATE SYNTHASE, CYTOPLASMIC-RELATED"/>
    <property type="match status" value="1"/>
</dbReference>
<dbReference type="Pfam" id="PF00763">
    <property type="entry name" value="THF_DHG_CYH"/>
    <property type="match status" value="1"/>
</dbReference>
<dbReference type="Pfam" id="PF02882">
    <property type="entry name" value="THF_DHG_CYH_C"/>
    <property type="match status" value="1"/>
</dbReference>
<dbReference type="PRINTS" id="PR00085">
    <property type="entry name" value="THFDHDRGNASE"/>
</dbReference>
<dbReference type="SUPFAM" id="SSF53223">
    <property type="entry name" value="Aminoacid dehydrogenase-like, N-terminal domain"/>
    <property type="match status" value="1"/>
</dbReference>
<dbReference type="SUPFAM" id="SSF51735">
    <property type="entry name" value="NAD(P)-binding Rossmann-fold domains"/>
    <property type="match status" value="1"/>
</dbReference>
<dbReference type="PROSITE" id="PS00766">
    <property type="entry name" value="THF_DHG_CYH_1"/>
    <property type="match status" value="1"/>
</dbReference>
<dbReference type="PROSITE" id="PS00767">
    <property type="entry name" value="THF_DHG_CYH_2"/>
    <property type="match status" value="1"/>
</dbReference>
<proteinExistence type="evidence at protein level"/>